<keyword id="KW-0012">Acyltransferase</keyword>
<keyword id="KW-0963">Cytoplasm</keyword>
<keyword id="KW-0441">Lipid A biosynthesis</keyword>
<keyword id="KW-0444">Lipid biosynthesis</keyword>
<keyword id="KW-0443">Lipid metabolism</keyword>
<keyword id="KW-1185">Reference proteome</keyword>
<keyword id="KW-0677">Repeat</keyword>
<keyword id="KW-0808">Transferase</keyword>
<comment type="function">
    <text evidence="1">Involved in the biosynthesis of lipid A, a phosphorylated glycolipid that anchors the lipopolysaccharide to the outer membrane of the cell.</text>
</comment>
<comment type="catalytic activity">
    <reaction evidence="1">
        <text>a (3R)-hydroxyacyl-[ACP] + UDP-N-acetyl-alpha-D-glucosamine = a UDP-3-O-[(3R)-3-hydroxyacyl]-N-acetyl-alpha-D-glucosamine + holo-[ACP]</text>
        <dbReference type="Rhea" id="RHEA:67812"/>
        <dbReference type="Rhea" id="RHEA-COMP:9685"/>
        <dbReference type="Rhea" id="RHEA-COMP:9945"/>
        <dbReference type="ChEBI" id="CHEBI:57705"/>
        <dbReference type="ChEBI" id="CHEBI:64479"/>
        <dbReference type="ChEBI" id="CHEBI:78827"/>
        <dbReference type="ChEBI" id="CHEBI:173225"/>
        <dbReference type="EC" id="2.3.1.129"/>
    </reaction>
</comment>
<comment type="pathway">
    <text evidence="1">Glycolipid biosynthesis; lipid IV(A) biosynthesis; lipid IV(A) from (3R)-3-hydroxytetradecanoyl-[acyl-carrier-protein] and UDP-N-acetyl-alpha-D-glucosamine: step 1/6.</text>
</comment>
<comment type="subunit">
    <text evidence="1">Homotrimer.</text>
</comment>
<comment type="subcellular location">
    <subcellularLocation>
        <location evidence="1">Cytoplasm</location>
    </subcellularLocation>
</comment>
<comment type="similarity">
    <text evidence="1">Belongs to the transferase hexapeptide repeat family. LpxA subfamily.</text>
</comment>
<protein>
    <recommendedName>
        <fullName evidence="1">Acyl-[acyl-carrier-protein]--UDP-N-acetylglucosamine O-acyltransferase</fullName>
        <shortName evidence="1">UDP-N-acetylglucosamine acyltransferase</shortName>
        <ecNumber evidence="1">2.3.1.129</ecNumber>
    </recommendedName>
</protein>
<gene>
    <name evidence="1" type="primary">lpxA</name>
    <name type="ordered locus">CT_531</name>
</gene>
<name>LPXA_CHLTR</name>
<dbReference type="EC" id="2.3.1.129" evidence="1"/>
<dbReference type="EMBL" id="AE001273">
    <property type="protein sequence ID" value="AAC68133.1"/>
    <property type="molecule type" value="Genomic_DNA"/>
</dbReference>
<dbReference type="PIR" id="B71502">
    <property type="entry name" value="B71502"/>
</dbReference>
<dbReference type="RefSeq" id="NP_220046.1">
    <property type="nucleotide sequence ID" value="NC_000117.1"/>
</dbReference>
<dbReference type="RefSeq" id="WP_009872289.1">
    <property type="nucleotide sequence ID" value="NC_000117.1"/>
</dbReference>
<dbReference type="SMR" id="O84536"/>
<dbReference type="STRING" id="272561.CT_531"/>
<dbReference type="EnsemblBacteria" id="AAC68133">
    <property type="protein sequence ID" value="AAC68133"/>
    <property type="gene ID" value="CT_531"/>
</dbReference>
<dbReference type="GeneID" id="884307"/>
<dbReference type="KEGG" id="ctr:CT_531"/>
<dbReference type="PATRIC" id="fig|272561.5.peg.576"/>
<dbReference type="HOGENOM" id="CLU_061249_0_0_0"/>
<dbReference type="InParanoid" id="O84536"/>
<dbReference type="OrthoDB" id="9807278at2"/>
<dbReference type="UniPathway" id="UPA00359">
    <property type="reaction ID" value="UER00477"/>
</dbReference>
<dbReference type="Proteomes" id="UP000000431">
    <property type="component" value="Chromosome"/>
</dbReference>
<dbReference type="GO" id="GO:0005737">
    <property type="term" value="C:cytoplasm"/>
    <property type="evidence" value="ECO:0007669"/>
    <property type="project" value="UniProtKB-SubCell"/>
</dbReference>
<dbReference type="GO" id="GO:0016020">
    <property type="term" value="C:membrane"/>
    <property type="evidence" value="ECO:0007669"/>
    <property type="project" value="GOC"/>
</dbReference>
<dbReference type="GO" id="GO:0008780">
    <property type="term" value="F:acyl-[acyl-carrier-protein]-UDP-N-acetylglucosamine O-acyltransferase activity"/>
    <property type="evidence" value="ECO:0007669"/>
    <property type="project" value="UniProtKB-UniRule"/>
</dbReference>
<dbReference type="GO" id="GO:0009245">
    <property type="term" value="P:lipid A biosynthetic process"/>
    <property type="evidence" value="ECO:0007669"/>
    <property type="project" value="UniProtKB-UniRule"/>
</dbReference>
<dbReference type="CDD" id="cd03351">
    <property type="entry name" value="LbH_UDP-GlcNAc_AT"/>
    <property type="match status" value="1"/>
</dbReference>
<dbReference type="Gene3D" id="2.160.10.10">
    <property type="entry name" value="Hexapeptide repeat proteins"/>
    <property type="match status" value="1"/>
</dbReference>
<dbReference type="Gene3D" id="1.20.1180.10">
    <property type="entry name" value="Udp N-acetylglucosamine O-acyltransferase, C-terminal domain"/>
    <property type="match status" value="1"/>
</dbReference>
<dbReference type="HAMAP" id="MF_00387">
    <property type="entry name" value="LpxA"/>
    <property type="match status" value="1"/>
</dbReference>
<dbReference type="InterPro" id="IPR029098">
    <property type="entry name" value="Acetyltransf_C"/>
</dbReference>
<dbReference type="InterPro" id="IPR037157">
    <property type="entry name" value="Acetyltransf_C_sf"/>
</dbReference>
<dbReference type="InterPro" id="IPR001451">
    <property type="entry name" value="Hexapep"/>
</dbReference>
<dbReference type="InterPro" id="IPR018357">
    <property type="entry name" value="Hexapep_transf_CS"/>
</dbReference>
<dbReference type="InterPro" id="IPR010137">
    <property type="entry name" value="Lipid_A_LpxA"/>
</dbReference>
<dbReference type="InterPro" id="IPR011004">
    <property type="entry name" value="Trimer_LpxA-like_sf"/>
</dbReference>
<dbReference type="NCBIfam" id="TIGR01852">
    <property type="entry name" value="lipid_A_lpxA"/>
    <property type="match status" value="1"/>
</dbReference>
<dbReference type="NCBIfam" id="NF003657">
    <property type="entry name" value="PRK05289.1"/>
    <property type="match status" value="1"/>
</dbReference>
<dbReference type="PANTHER" id="PTHR43480">
    <property type="entry name" value="ACYL-[ACYL-CARRIER-PROTEIN]--UDP-N-ACETYLGLUCOSAMINE O-ACYLTRANSFERASE"/>
    <property type="match status" value="1"/>
</dbReference>
<dbReference type="PANTHER" id="PTHR43480:SF1">
    <property type="entry name" value="ACYL-[ACYL-CARRIER-PROTEIN]--UDP-N-ACETYLGLUCOSAMINE O-ACYLTRANSFERASE, MITOCHONDRIAL-RELATED"/>
    <property type="match status" value="1"/>
</dbReference>
<dbReference type="Pfam" id="PF13720">
    <property type="entry name" value="Acetyltransf_11"/>
    <property type="match status" value="1"/>
</dbReference>
<dbReference type="Pfam" id="PF00132">
    <property type="entry name" value="Hexapep"/>
    <property type="match status" value="1"/>
</dbReference>
<dbReference type="PIRSF" id="PIRSF000456">
    <property type="entry name" value="UDP-GlcNAc_acltr"/>
    <property type="match status" value="1"/>
</dbReference>
<dbReference type="SUPFAM" id="SSF51161">
    <property type="entry name" value="Trimeric LpxA-like enzymes"/>
    <property type="match status" value="1"/>
</dbReference>
<dbReference type="PROSITE" id="PS00101">
    <property type="entry name" value="HEXAPEP_TRANSFERASES"/>
    <property type="match status" value="1"/>
</dbReference>
<organism>
    <name type="scientific">Chlamydia trachomatis serovar D (strain ATCC VR-885 / DSM 19411 / UW-3/Cx)</name>
    <dbReference type="NCBI Taxonomy" id="272561"/>
    <lineage>
        <taxon>Bacteria</taxon>
        <taxon>Pseudomonadati</taxon>
        <taxon>Chlamydiota</taxon>
        <taxon>Chlamydiia</taxon>
        <taxon>Chlamydiales</taxon>
        <taxon>Chlamydiaceae</taxon>
        <taxon>Chlamydia/Chlamydophila group</taxon>
        <taxon>Chlamydia</taxon>
    </lineage>
</organism>
<reference key="1">
    <citation type="journal article" date="1998" name="Science">
        <title>Genome sequence of an obligate intracellular pathogen of humans: Chlamydia trachomatis.</title>
        <authorList>
            <person name="Stephens R.S."/>
            <person name="Kalman S."/>
            <person name="Lammel C.J."/>
            <person name="Fan J."/>
            <person name="Marathe R."/>
            <person name="Aravind L."/>
            <person name="Mitchell W.P."/>
            <person name="Olinger L."/>
            <person name="Tatusov R.L."/>
            <person name="Zhao Q."/>
            <person name="Koonin E.V."/>
            <person name="Davis R.W."/>
        </authorList>
    </citation>
    <scope>NUCLEOTIDE SEQUENCE [LARGE SCALE GENOMIC DNA]</scope>
    <source>
        <strain>ATCC VR-885 / DSM 19411 / UW-3/Cx</strain>
    </source>
</reference>
<proteinExistence type="inferred from homology"/>
<accession>O84536</accession>
<feature type="chain" id="PRO_0000188044" description="Acyl-[acyl-carrier-protein]--UDP-N-acetylglucosamine O-acyltransferase">
    <location>
        <begin position="1"/>
        <end position="280"/>
    </location>
</feature>
<sequence>MTNIHPTAIVEDGARIGNNVTIEPYAIVKKNVTLCDDVVVKSYAYIDGFTTIGRGTTVWPSAMIGNKPQDLKFKGEKTFVEIGEHCEIREFAMITSSTFEGTTVSIGNNCLIMPWAHIAHNCSVGNNVVFSTHVQLAGHVQVGDCVTIGSMVGVHQFVRIGSYSMVGAMSGIRRDIPPFTIGTGNPYALGGINKVGLQRRQVSFETRLALIKTFKRVFRSDESFQASLESVLEDFGEVPEVRHFVEFCRQPSKRGIERGVDCEASLEEPIDKKEGAFVES</sequence>
<evidence type="ECO:0000255" key="1">
    <source>
        <dbReference type="HAMAP-Rule" id="MF_00387"/>
    </source>
</evidence>